<dbReference type="EMBL" id="J04502">
    <property type="protein sequence ID" value="AAA84478.1"/>
    <property type="molecule type" value="Genomic_DNA"/>
</dbReference>
<dbReference type="EMBL" id="X86563">
    <property type="protein sequence ID" value="CAA60302.1"/>
    <property type="molecule type" value="Genomic_DNA"/>
</dbReference>
<dbReference type="PIR" id="S58568">
    <property type="entry name" value="S58568"/>
</dbReference>
<dbReference type="RefSeq" id="NP_043041.1">
    <property type="nucleotide sequence ID" value="NC_001666.2"/>
</dbReference>
<dbReference type="SMR" id="P69388"/>
<dbReference type="FunCoup" id="P69388">
    <property type="interactions" value="36"/>
</dbReference>
<dbReference type="STRING" id="4577.P69388"/>
<dbReference type="PaxDb" id="4577-GRMZM2G062044_P01"/>
<dbReference type="GeneID" id="845203"/>
<dbReference type="KEGG" id="zma:845203"/>
<dbReference type="MaizeGDB" id="69552"/>
<dbReference type="eggNOG" id="ENOG502S2SP">
    <property type="taxonomic scope" value="Eukaryota"/>
</dbReference>
<dbReference type="HOGENOM" id="CLU_194095_0_0_1"/>
<dbReference type="InParanoid" id="P69388"/>
<dbReference type="OrthoDB" id="722814at2759"/>
<dbReference type="Proteomes" id="UP000007305">
    <property type="component" value="Chloroplast"/>
</dbReference>
<dbReference type="GO" id="GO:0009535">
    <property type="term" value="C:chloroplast thylakoid membrane"/>
    <property type="evidence" value="ECO:0007669"/>
    <property type="project" value="UniProtKB-SubCell"/>
</dbReference>
<dbReference type="GO" id="GO:0009539">
    <property type="term" value="C:photosystem II reaction center"/>
    <property type="evidence" value="ECO:0007669"/>
    <property type="project" value="InterPro"/>
</dbReference>
<dbReference type="GO" id="GO:0009055">
    <property type="term" value="F:electron transfer activity"/>
    <property type="evidence" value="ECO:0007669"/>
    <property type="project" value="UniProtKB-UniRule"/>
</dbReference>
<dbReference type="GO" id="GO:0020037">
    <property type="term" value="F:heme binding"/>
    <property type="evidence" value="ECO:0007669"/>
    <property type="project" value="InterPro"/>
</dbReference>
<dbReference type="GO" id="GO:0005506">
    <property type="term" value="F:iron ion binding"/>
    <property type="evidence" value="ECO:0007669"/>
    <property type="project" value="UniProtKB-UniRule"/>
</dbReference>
<dbReference type="GO" id="GO:0009767">
    <property type="term" value="P:photosynthetic electron transport chain"/>
    <property type="evidence" value="ECO:0007669"/>
    <property type="project" value="InterPro"/>
</dbReference>
<dbReference type="Gene3D" id="1.20.5.860">
    <property type="entry name" value="Photosystem II cytochrome b559, alpha subunit"/>
    <property type="match status" value="1"/>
</dbReference>
<dbReference type="HAMAP" id="MF_00642">
    <property type="entry name" value="PSII_PsbE"/>
    <property type="match status" value="1"/>
</dbReference>
<dbReference type="InterPro" id="IPR006217">
    <property type="entry name" value="PSII_cyt_b559_asu"/>
</dbReference>
<dbReference type="InterPro" id="IPR037025">
    <property type="entry name" value="PSII_cyt_b559_asu_sf"/>
</dbReference>
<dbReference type="InterPro" id="IPR006216">
    <property type="entry name" value="PSII_cyt_b559_CS"/>
</dbReference>
<dbReference type="InterPro" id="IPR013081">
    <property type="entry name" value="PSII_cyt_b559_N"/>
</dbReference>
<dbReference type="InterPro" id="IPR013082">
    <property type="entry name" value="PSII_cytb559_asu_lum"/>
</dbReference>
<dbReference type="NCBIfam" id="TIGR01332">
    <property type="entry name" value="cyt_b559_alpha"/>
    <property type="match status" value="1"/>
</dbReference>
<dbReference type="PANTHER" id="PTHR33391:SF13">
    <property type="entry name" value="CYTOCHROME B559 SUBUNIT ALPHA"/>
    <property type="match status" value="1"/>
</dbReference>
<dbReference type="PANTHER" id="PTHR33391">
    <property type="entry name" value="CYTOCHROME B559 SUBUNIT BETA-RELATED"/>
    <property type="match status" value="1"/>
</dbReference>
<dbReference type="Pfam" id="PF00283">
    <property type="entry name" value="Cytochrom_B559"/>
    <property type="match status" value="1"/>
</dbReference>
<dbReference type="Pfam" id="PF00284">
    <property type="entry name" value="Cytochrom_B559a"/>
    <property type="match status" value="1"/>
</dbReference>
<dbReference type="PIRSF" id="PIRSF000036">
    <property type="entry name" value="PsbE"/>
    <property type="match status" value="1"/>
</dbReference>
<dbReference type="SUPFAM" id="SSF161045">
    <property type="entry name" value="Cytochrome b559 subunits"/>
    <property type="match status" value="1"/>
</dbReference>
<dbReference type="PROSITE" id="PS00537">
    <property type="entry name" value="CYTOCHROME_B559"/>
    <property type="match status" value="1"/>
</dbReference>
<comment type="function">
    <text evidence="1">This b-type cytochrome is tightly associated with the reaction center of photosystem II (PSII). PSII is a light-driven water:plastoquinone oxidoreductase that uses light energy to abstract electrons from H(2)O, generating O(2) and a proton gradient subsequently used for ATP formation. It consists of a core antenna complex that captures photons, and an electron transfer chain that converts photonic excitation into a charge separation.</text>
</comment>
<comment type="cofactor">
    <cofactor evidence="1">
        <name>heme b</name>
        <dbReference type="ChEBI" id="CHEBI:60344"/>
    </cofactor>
    <text evidence="1">With its partner (PsbF) binds heme. PSII binds additional chlorophylls, carotenoids and specific lipids.</text>
</comment>
<comment type="subunit">
    <text evidence="1">Heterodimer of an alpha subunit and a beta subunit. PSII is composed of 1 copy each of membrane proteins PsbA, PsbB, PsbC, PsbD, PsbE, PsbF, PsbH, PsbI, PsbJ, PsbK, PsbL, PsbM, PsbT, PsbX, PsbY, PsbZ, Psb30/Ycf12, at least 3 peripheral proteins of the oxygen-evolving complex and a large number of cofactors. It forms dimeric complexes.</text>
</comment>
<comment type="subcellular location">
    <subcellularLocation>
        <location evidence="1">Plastid</location>
        <location evidence="1">Chloroplast thylakoid membrane</location>
        <topology evidence="1">Single-pass membrane protein</topology>
    </subcellularLocation>
</comment>
<comment type="similarity">
    <text evidence="1">Belongs to the PsbE/PsbF family.</text>
</comment>
<protein>
    <recommendedName>
        <fullName evidence="1">Cytochrome b559 subunit alpha</fullName>
    </recommendedName>
    <alternativeName>
        <fullName evidence="1">PSII reaction center subunit V</fullName>
    </alternativeName>
</protein>
<keyword id="KW-0150">Chloroplast</keyword>
<keyword id="KW-0249">Electron transport</keyword>
<keyword id="KW-0349">Heme</keyword>
<keyword id="KW-0408">Iron</keyword>
<keyword id="KW-0472">Membrane</keyword>
<keyword id="KW-0479">Metal-binding</keyword>
<keyword id="KW-0602">Photosynthesis</keyword>
<keyword id="KW-0604">Photosystem II</keyword>
<keyword id="KW-0934">Plastid</keyword>
<keyword id="KW-1185">Reference proteome</keyword>
<keyword id="KW-0793">Thylakoid</keyword>
<keyword id="KW-0812">Transmembrane</keyword>
<keyword id="KW-1133">Transmembrane helix</keyword>
<keyword id="KW-0813">Transport</keyword>
<organism>
    <name type="scientific">Zea mays</name>
    <name type="common">Maize</name>
    <dbReference type="NCBI Taxonomy" id="4577"/>
    <lineage>
        <taxon>Eukaryota</taxon>
        <taxon>Viridiplantae</taxon>
        <taxon>Streptophyta</taxon>
        <taxon>Embryophyta</taxon>
        <taxon>Tracheophyta</taxon>
        <taxon>Spermatophyta</taxon>
        <taxon>Magnoliopsida</taxon>
        <taxon>Liliopsida</taxon>
        <taxon>Poales</taxon>
        <taxon>Poaceae</taxon>
        <taxon>PACMAD clade</taxon>
        <taxon>Panicoideae</taxon>
        <taxon>Andropogonodae</taxon>
        <taxon>Andropogoneae</taxon>
        <taxon>Tripsacinae</taxon>
        <taxon>Zea</taxon>
    </lineage>
</organism>
<proteinExistence type="inferred from homology"/>
<sequence length="83" mass="9445">MSGSTGERSFADIITSIRYWVIHSITIPSLFIAGWLFVSTGLAYDVFGSPRPNEYFTESRQGIPLITDRFDSLEQLDEFSRSF</sequence>
<reference key="1">
    <citation type="journal article" date="1989" name="Proc. Natl. Acad. Sci. U.S.A.">
        <title>A 4-kDa maize chloroplast polypeptide associated with the cytochrome b6-f complex: subunit 5, encoded by the chloroplast petE gene.</title>
        <authorList>
            <person name="Haley J."/>
            <person name="Bogorad L."/>
        </authorList>
    </citation>
    <scope>NUCLEOTIDE SEQUENCE [GENOMIC DNA]</scope>
    <source>
        <strain>cv. FR9cms X FR37</strain>
    </source>
</reference>
<reference key="2">
    <citation type="journal article" date="1995" name="J. Mol. Biol.">
        <title>Complete sequence of the maize chloroplast genome: gene content, hotspots of divergence and fine tuning of genetic information by transcript editing.</title>
        <authorList>
            <person name="Maier R.M."/>
            <person name="Neckermann K."/>
            <person name="Igloi G.L."/>
            <person name="Koessel H."/>
        </authorList>
    </citation>
    <scope>NUCLEOTIDE SEQUENCE [LARGE SCALE GENOMIC DNA]</scope>
    <source>
        <strain>cv. B73</strain>
    </source>
</reference>
<feature type="chain" id="PRO_0000200316" description="Cytochrome b559 subunit alpha">
    <location>
        <begin position="1"/>
        <end position="83"/>
    </location>
</feature>
<feature type="transmembrane region" description="Helical" evidence="1">
    <location>
        <begin position="21"/>
        <end position="35"/>
    </location>
</feature>
<feature type="binding site" description="axial binding residue" evidence="1">
    <location>
        <position position="23"/>
    </location>
    <ligand>
        <name>heme</name>
        <dbReference type="ChEBI" id="CHEBI:30413"/>
        <note>ligand shared with beta subunit</note>
    </ligand>
    <ligandPart>
        <name>Fe</name>
        <dbReference type="ChEBI" id="CHEBI:18248"/>
    </ligandPart>
</feature>
<name>PSBE_MAIZE</name>
<evidence type="ECO:0000255" key="1">
    <source>
        <dbReference type="HAMAP-Rule" id="MF_00642"/>
    </source>
</evidence>
<accession>P69388</accession>
<accession>P05169</accession>
<accession>P10879</accession>
<accession>Q95H57</accession>
<geneLocation type="chloroplast"/>
<gene>
    <name evidence="1" type="primary">psbE</name>
</gene>